<reference key="1">
    <citation type="submission" date="2005-07" db="EMBL/GenBank/DDBJ databases">
        <title>Complete sequence of Synechococcus sp. CC9605.</title>
        <authorList>
            <consortium name="US DOE Joint Genome Institute"/>
            <person name="Copeland A."/>
            <person name="Lucas S."/>
            <person name="Lapidus A."/>
            <person name="Barry K."/>
            <person name="Detter J.C."/>
            <person name="Glavina T."/>
            <person name="Hammon N."/>
            <person name="Israni S."/>
            <person name="Pitluck S."/>
            <person name="Schmutz J."/>
            <person name="Martinez M."/>
            <person name="Larimer F."/>
            <person name="Land M."/>
            <person name="Kyrpides N."/>
            <person name="Ivanova N."/>
            <person name="Richardson P."/>
        </authorList>
    </citation>
    <scope>NUCLEOTIDE SEQUENCE [LARGE SCALE GENOMIC DNA]</scope>
    <source>
        <strain>CC9605</strain>
    </source>
</reference>
<evidence type="ECO:0000255" key="1">
    <source>
        <dbReference type="HAMAP-Rule" id="MF_00358"/>
    </source>
</evidence>
<evidence type="ECO:0000305" key="2"/>
<proteinExistence type="inferred from homology"/>
<protein>
    <recommendedName>
        <fullName evidence="1">Small ribosomal subunit protein bS21</fullName>
    </recommendedName>
    <alternativeName>
        <fullName evidence="2">30S ribosomal protein S21</fullName>
    </alternativeName>
</protein>
<accession>Q3AKR1</accession>
<feature type="chain" id="PRO_0000266785" description="Small ribosomal subunit protein bS21">
    <location>
        <begin position="1"/>
        <end position="58"/>
    </location>
</feature>
<sequence>MSQVTVGENEGIESALRRFKRSVAKAGIFSDLRRIRHHETPVEKYKRKLKQRSRNRRR</sequence>
<organism>
    <name type="scientific">Synechococcus sp. (strain CC9605)</name>
    <dbReference type="NCBI Taxonomy" id="110662"/>
    <lineage>
        <taxon>Bacteria</taxon>
        <taxon>Bacillati</taxon>
        <taxon>Cyanobacteriota</taxon>
        <taxon>Cyanophyceae</taxon>
        <taxon>Synechococcales</taxon>
        <taxon>Synechococcaceae</taxon>
        <taxon>Synechococcus</taxon>
    </lineage>
</organism>
<name>RS21_SYNSC</name>
<keyword id="KW-0687">Ribonucleoprotein</keyword>
<keyword id="KW-0689">Ribosomal protein</keyword>
<comment type="similarity">
    <text evidence="1">Belongs to the bacterial ribosomal protein bS21 family.</text>
</comment>
<gene>
    <name evidence="1" type="primary">rpsU</name>
    <name evidence="1" type="synonym">rps21</name>
    <name type="ordered locus">Syncc9605_1064</name>
</gene>
<dbReference type="EMBL" id="CP000110">
    <property type="protein sequence ID" value="ABB34821.1"/>
    <property type="molecule type" value="Genomic_DNA"/>
</dbReference>
<dbReference type="RefSeq" id="WP_009790002.1">
    <property type="nucleotide sequence ID" value="NC_007516.1"/>
</dbReference>
<dbReference type="SMR" id="Q3AKR1"/>
<dbReference type="STRING" id="110662.Syncc9605_1064"/>
<dbReference type="KEGG" id="syd:Syncc9605_1064"/>
<dbReference type="eggNOG" id="COG0828">
    <property type="taxonomic scope" value="Bacteria"/>
</dbReference>
<dbReference type="HOGENOM" id="CLU_159258_3_1_3"/>
<dbReference type="OrthoDB" id="9799244at2"/>
<dbReference type="GO" id="GO:1990904">
    <property type="term" value="C:ribonucleoprotein complex"/>
    <property type="evidence" value="ECO:0007669"/>
    <property type="project" value="UniProtKB-KW"/>
</dbReference>
<dbReference type="GO" id="GO:0005840">
    <property type="term" value="C:ribosome"/>
    <property type="evidence" value="ECO:0007669"/>
    <property type="project" value="UniProtKB-KW"/>
</dbReference>
<dbReference type="GO" id="GO:0003735">
    <property type="term" value="F:structural constituent of ribosome"/>
    <property type="evidence" value="ECO:0007669"/>
    <property type="project" value="InterPro"/>
</dbReference>
<dbReference type="GO" id="GO:0006412">
    <property type="term" value="P:translation"/>
    <property type="evidence" value="ECO:0007669"/>
    <property type="project" value="UniProtKB-UniRule"/>
</dbReference>
<dbReference type="Gene3D" id="1.20.5.1150">
    <property type="entry name" value="Ribosomal protein S8"/>
    <property type="match status" value="1"/>
</dbReference>
<dbReference type="HAMAP" id="MF_00358">
    <property type="entry name" value="Ribosomal_bS21"/>
    <property type="match status" value="1"/>
</dbReference>
<dbReference type="InterPro" id="IPR001911">
    <property type="entry name" value="Ribosomal_bS21"/>
</dbReference>
<dbReference type="InterPro" id="IPR018278">
    <property type="entry name" value="Ribosomal_bS21_CS"/>
</dbReference>
<dbReference type="InterPro" id="IPR038380">
    <property type="entry name" value="Ribosomal_bS21_sf"/>
</dbReference>
<dbReference type="NCBIfam" id="TIGR00030">
    <property type="entry name" value="S21p"/>
    <property type="match status" value="1"/>
</dbReference>
<dbReference type="PANTHER" id="PTHR21109">
    <property type="entry name" value="MITOCHONDRIAL 28S RIBOSOMAL PROTEIN S21"/>
    <property type="match status" value="1"/>
</dbReference>
<dbReference type="PANTHER" id="PTHR21109:SF0">
    <property type="entry name" value="SMALL RIBOSOMAL SUBUNIT PROTEIN BS21M"/>
    <property type="match status" value="1"/>
</dbReference>
<dbReference type="Pfam" id="PF01165">
    <property type="entry name" value="Ribosomal_S21"/>
    <property type="match status" value="1"/>
</dbReference>
<dbReference type="PRINTS" id="PR00976">
    <property type="entry name" value="RIBOSOMALS21"/>
</dbReference>
<dbReference type="PROSITE" id="PS01181">
    <property type="entry name" value="RIBOSOMAL_S21"/>
    <property type="match status" value="1"/>
</dbReference>